<protein>
    <recommendedName>
        <fullName>Protein PufQ</fullName>
    </recommendedName>
</protein>
<dbReference type="EMBL" id="AJ010302">
    <property type="protein sequence ID" value="CAB38750.1"/>
    <property type="molecule type" value="Genomic_DNA"/>
</dbReference>
<dbReference type="PIR" id="S18581">
    <property type="entry name" value="S18581"/>
</dbReference>
<dbReference type="GO" id="GO:0030494">
    <property type="term" value="P:bacteriochlorophyll biosynthetic process"/>
    <property type="evidence" value="ECO:0007669"/>
    <property type="project" value="UniProtKB-KW"/>
</dbReference>
<dbReference type="GO" id="GO:0015979">
    <property type="term" value="P:photosynthesis"/>
    <property type="evidence" value="ECO:0007669"/>
    <property type="project" value="UniProtKB-KW"/>
</dbReference>
<dbReference type="InterPro" id="IPR008800">
    <property type="entry name" value="PufQ_cyt-su"/>
</dbReference>
<dbReference type="Pfam" id="PF05398">
    <property type="entry name" value="PufQ"/>
    <property type="match status" value="1"/>
</dbReference>
<dbReference type="PIRSF" id="PIRSF005825">
    <property type="entry name" value="PufQ"/>
    <property type="match status" value="1"/>
</dbReference>
<name>PUFQ_CERSP</name>
<sequence>MSDHAVNTPVHAARAHGHRAPRAEFYVYFAVILLGGFPVAFVSWIVSTIRHRRLPKRGPFASAWFDAKAITPLIFRA</sequence>
<feature type="chain" id="PRO_0000097101" description="Protein PufQ">
    <location>
        <begin position="1"/>
        <end position="77"/>
    </location>
</feature>
<reference key="1">
    <citation type="journal article" date="1991" name="Mol. Microbiol.">
        <title>DNA sequencing and complementation/deletion analysis of the bchA-puf operon region of Rhodobacter sphaeroides: in vivo mapping of the oxygen-regulated puf promoter.</title>
        <authorList>
            <person name="Hunter C.N."/>
            <person name="McGlynn P."/>
            <person name="Ashby M.K."/>
            <person name="Burgess J.G."/>
            <person name="Olsen J.D."/>
        </authorList>
    </citation>
    <scope>NUCLEOTIDE SEQUENCE [GENOMIC DNA]</scope>
    <source>
        <strain>NC13</strain>
    </source>
</reference>
<reference key="2">
    <citation type="journal article" date="1993" name="Mol. Gen. Genet.">
        <title>Genetic analysis of the bchC and bchA genes of Rhodobacter sphaeroides.</title>
        <authorList>
            <person name="McGlynn P."/>
            <person name="Hunter C.N."/>
        </authorList>
    </citation>
    <scope>NUCLEOTIDE SEQUENCE [GENOMIC DNA] OF 1-7</scope>
</reference>
<keyword id="KW-0077">Bacteriochlorophyll biosynthesis</keyword>
<keyword id="KW-0149">Chlorophyll biosynthesis</keyword>
<keyword id="KW-0602">Photosynthesis</keyword>
<evidence type="ECO:0000305" key="1"/>
<proteinExistence type="inferred from homology"/>
<organism>
    <name type="scientific">Cereibacter sphaeroides</name>
    <name type="common">Rhodobacter sphaeroides</name>
    <dbReference type="NCBI Taxonomy" id="1063"/>
    <lineage>
        <taxon>Bacteria</taxon>
        <taxon>Pseudomonadati</taxon>
        <taxon>Pseudomonadota</taxon>
        <taxon>Alphaproteobacteria</taxon>
        <taxon>Rhodobacterales</taxon>
        <taxon>Paracoccaceae</taxon>
        <taxon>Cereibacter</taxon>
    </lineage>
</organism>
<gene>
    <name type="primary">pufQ</name>
</gene>
<accession>P0C0Y6</accession>
<accession>P16069</accession>
<comment type="function">
    <text>Required for bacteriochlorophyll biosynthesis. Directly involved in the assembly of both the B875 and B800-850 pigment-protein complexes.</text>
</comment>
<comment type="similarity">
    <text evidence="1">Belongs to the PufQ family.</text>
</comment>